<comment type="function">
    <text evidence="1">Catalytic Component of the COP9 signalosome (CSN) complex that acts as an regulator of the ubiquitin (Ubl) conjugation pathway by mediating the deneddylation of the cullin subunit of SCF-type E3 ubiquitin-protein ligase complexes.</text>
</comment>
<comment type="subunit">
    <text evidence="1">Component of the COP9 signalosome (CSN) complex.</text>
</comment>
<comment type="subcellular location">
    <subcellularLocation>
        <location evidence="1">Cytoplasm</location>
    </subcellularLocation>
    <subcellularLocation>
        <location evidence="1">Nucleus</location>
    </subcellularLocation>
</comment>
<comment type="domain">
    <text evidence="1">The JAMM motif is essential for the protease activity of the CSN complex resulting in deneddylation of cullins. It constitutes the catalytic center of the complex (By similarity).</text>
</comment>
<comment type="similarity">
    <text evidence="4">Belongs to the peptidase M67A family. CSN5 subfamily.</text>
</comment>
<accession>P0CQ24</accession>
<accession>Q55L72</accession>
<accession>Q5KAB0</accession>
<name>CSN5_CRYNJ</name>
<keyword id="KW-0963">Cytoplasm</keyword>
<keyword id="KW-0378">Hydrolase</keyword>
<keyword id="KW-0479">Metal-binding</keyword>
<keyword id="KW-0482">Metalloprotease</keyword>
<keyword id="KW-0539">Nucleus</keyword>
<keyword id="KW-0645">Protease</keyword>
<keyword id="KW-1185">Reference proteome</keyword>
<keyword id="KW-0736">Signalosome</keyword>
<keyword id="KW-0862">Zinc</keyword>
<gene>
    <name type="primary">RRI1</name>
    <name type="synonym">CSN5</name>
    <name type="ordered locus">CNJ02350</name>
</gene>
<reference key="1">
    <citation type="journal article" date="2005" name="Science">
        <title>The genome of the basidiomycetous yeast and human pathogen Cryptococcus neoformans.</title>
        <authorList>
            <person name="Loftus B.J."/>
            <person name="Fung E."/>
            <person name="Roncaglia P."/>
            <person name="Rowley D."/>
            <person name="Amedeo P."/>
            <person name="Bruno D."/>
            <person name="Vamathevan J."/>
            <person name="Miranda M."/>
            <person name="Anderson I.J."/>
            <person name="Fraser J.A."/>
            <person name="Allen J.E."/>
            <person name="Bosdet I.E."/>
            <person name="Brent M.R."/>
            <person name="Chiu R."/>
            <person name="Doering T.L."/>
            <person name="Donlin M.J."/>
            <person name="D'Souza C.A."/>
            <person name="Fox D.S."/>
            <person name="Grinberg V."/>
            <person name="Fu J."/>
            <person name="Fukushima M."/>
            <person name="Haas B.J."/>
            <person name="Huang J.C."/>
            <person name="Janbon G."/>
            <person name="Jones S.J.M."/>
            <person name="Koo H.L."/>
            <person name="Krzywinski M.I."/>
            <person name="Kwon-Chung K.J."/>
            <person name="Lengeler K.B."/>
            <person name="Maiti R."/>
            <person name="Marra M.A."/>
            <person name="Marra R.E."/>
            <person name="Mathewson C.A."/>
            <person name="Mitchell T.G."/>
            <person name="Pertea M."/>
            <person name="Riggs F.R."/>
            <person name="Salzberg S.L."/>
            <person name="Schein J.E."/>
            <person name="Shvartsbeyn A."/>
            <person name="Shin H."/>
            <person name="Shumway M."/>
            <person name="Specht C.A."/>
            <person name="Suh B.B."/>
            <person name="Tenney A."/>
            <person name="Utterback T.R."/>
            <person name="Wickes B.L."/>
            <person name="Wortman J.R."/>
            <person name="Wye N.H."/>
            <person name="Kronstad J.W."/>
            <person name="Lodge J.K."/>
            <person name="Heitman J."/>
            <person name="Davis R.W."/>
            <person name="Fraser C.M."/>
            <person name="Hyman R.W."/>
        </authorList>
    </citation>
    <scope>NUCLEOTIDE SEQUENCE [LARGE SCALE GENOMIC DNA]</scope>
    <source>
        <strain>JEC21 / ATCC MYA-565</strain>
    </source>
</reference>
<evidence type="ECO:0000250" key="1"/>
<evidence type="ECO:0000255" key="2">
    <source>
        <dbReference type="PROSITE-ProRule" id="PRU01182"/>
    </source>
</evidence>
<evidence type="ECO:0000256" key="3">
    <source>
        <dbReference type="SAM" id="MobiDB-lite"/>
    </source>
</evidence>
<evidence type="ECO:0000305" key="4"/>
<protein>
    <recommendedName>
        <fullName>COP9 signalosome complex subunit 5</fullName>
        <ecNumber>3.4.-.-</ecNumber>
    </recommendedName>
</protein>
<feature type="chain" id="PRO_0000194850" description="COP9 signalosome complex subunit 5">
    <location>
        <begin position="1"/>
        <end position="371"/>
    </location>
</feature>
<feature type="domain" description="MPN" evidence="2">
    <location>
        <begin position="51"/>
        <end position="188"/>
    </location>
</feature>
<feature type="region of interest" description="Disordered" evidence="3">
    <location>
        <begin position="278"/>
        <end position="333"/>
    </location>
</feature>
<feature type="region of interest" description="Disordered" evidence="3">
    <location>
        <begin position="352"/>
        <end position="371"/>
    </location>
</feature>
<feature type="short sequence motif" description="JAMM motif" evidence="2">
    <location>
        <begin position="134"/>
        <end position="147"/>
    </location>
</feature>
<feature type="compositionally biased region" description="Low complexity" evidence="3">
    <location>
        <begin position="278"/>
        <end position="292"/>
    </location>
</feature>
<feature type="compositionally biased region" description="Basic and acidic residues" evidence="3">
    <location>
        <begin position="293"/>
        <end position="313"/>
    </location>
</feature>
<feature type="compositionally biased region" description="Polar residues" evidence="3">
    <location>
        <begin position="323"/>
        <end position="333"/>
    </location>
</feature>
<feature type="binding site" evidence="2">
    <location>
        <position position="134"/>
    </location>
    <ligand>
        <name>Zn(2+)</name>
        <dbReference type="ChEBI" id="CHEBI:29105"/>
        <note>catalytic</note>
    </ligand>
</feature>
<feature type="binding site" evidence="2">
    <location>
        <position position="136"/>
    </location>
    <ligand>
        <name>Zn(2+)</name>
        <dbReference type="ChEBI" id="CHEBI:29105"/>
        <note>catalytic</note>
    </ligand>
</feature>
<feature type="binding site" evidence="2">
    <location>
        <position position="147"/>
    </location>
    <ligand>
        <name>Zn(2+)</name>
        <dbReference type="ChEBI" id="CHEBI:29105"/>
        <note>catalytic</note>
    </ligand>
</feature>
<organism>
    <name type="scientific">Cryptococcus neoformans var. neoformans serotype D (strain JEC21 / ATCC MYA-565)</name>
    <name type="common">Filobasidiella neoformans</name>
    <dbReference type="NCBI Taxonomy" id="214684"/>
    <lineage>
        <taxon>Eukaryota</taxon>
        <taxon>Fungi</taxon>
        <taxon>Dikarya</taxon>
        <taxon>Basidiomycota</taxon>
        <taxon>Agaricomycotina</taxon>
        <taxon>Tremellomycetes</taxon>
        <taxon>Tremellales</taxon>
        <taxon>Cryptococcaceae</taxon>
        <taxon>Cryptococcus</taxon>
        <taxon>Cryptococcus neoformans species complex</taxon>
    </lineage>
</organism>
<proteinExistence type="inferred from homology"/>
<sequence length="371" mass="41382">MASTARKTFEINNNVQVVDPSAAIFQYSREEEKLLDDEAPWRTDPHYFHTVKISAVALIKMVTHARSGGIYEIMGIMYGKVRDGTFWIMDVAALPVQGTETRVNAGNEAMEYMVNFQTANAEAGKGELLRGWYHSHPGYGCWLSGIDVNTQLNNQKFNDPYLAVVIDPNRTVSAGKVEIGAFRTYPEGYTPPATGNSQYQSIPMDKIEDFGVHANAYYPLKVEIYKSKLDEKMLDLLWNKYWVATLSSNSLVSNLEYSTSQVQDLNAKLRAASQSISNSSSKLKLKPTQPTTKGKETTEGSDKKLKKGEKEFSGVEEEETPLNKVTQESSRITSEAENGIISQLLKEKLFNTPLTQSVDDKSAQATVQGRY</sequence>
<dbReference type="EC" id="3.4.-.-"/>
<dbReference type="EMBL" id="AE017350">
    <property type="protein sequence ID" value="AAW45929.1"/>
    <property type="molecule type" value="Genomic_DNA"/>
</dbReference>
<dbReference type="RefSeq" id="XP_567446.1">
    <property type="nucleotide sequence ID" value="XM_567446.1"/>
</dbReference>
<dbReference type="SMR" id="P0CQ24"/>
<dbReference type="FunCoup" id="P0CQ24">
    <property type="interactions" value="674"/>
</dbReference>
<dbReference type="STRING" id="214684.P0CQ24"/>
<dbReference type="MEROPS" id="M67.A13"/>
<dbReference type="PaxDb" id="214684-P0CQ24"/>
<dbReference type="EnsemblFungi" id="AAW45929">
    <property type="protein sequence ID" value="AAW45929"/>
    <property type="gene ID" value="CNJ02350"/>
</dbReference>
<dbReference type="GeneID" id="3254222"/>
<dbReference type="KEGG" id="cne:CNJ02350"/>
<dbReference type="VEuPathDB" id="FungiDB:CNJ02350"/>
<dbReference type="eggNOG" id="KOG1554">
    <property type="taxonomic scope" value="Eukaryota"/>
</dbReference>
<dbReference type="HOGENOM" id="CLU_053034_0_2_1"/>
<dbReference type="InParanoid" id="P0CQ24"/>
<dbReference type="OMA" id="VKMKLFQ"/>
<dbReference type="OrthoDB" id="605656at2759"/>
<dbReference type="Proteomes" id="UP000002149">
    <property type="component" value="Chromosome 10"/>
</dbReference>
<dbReference type="GO" id="GO:0008180">
    <property type="term" value="C:COP9 signalosome"/>
    <property type="evidence" value="ECO:0000318"/>
    <property type="project" value="GO_Central"/>
</dbReference>
<dbReference type="GO" id="GO:0005737">
    <property type="term" value="C:cytoplasm"/>
    <property type="evidence" value="ECO:0000318"/>
    <property type="project" value="GO_Central"/>
</dbReference>
<dbReference type="GO" id="GO:0019784">
    <property type="term" value="F:deNEDDylase activity"/>
    <property type="evidence" value="ECO:0000318"/>
    <property type="project" value="GO_Central"/>
</dbReference>
<dbReference type="GO" id="GO:0046872">
    <property type="term" value="F:metal ion binding"/>
    <property type="evidence" value="ECO:0007669"/>
    <property type="project" value="UniProtKB-KW"/>
</dbReference>
<dbReference type="GO" id="GO:0008237">
    <property type="term" value="F:metallopeptidase activity"/>
    <property type="evidence" value="ECO:0000318"/>
    <property type="project" value="GO_Central"/>
</dbReference>
<dbReference type="GO" id="GO:0000338">
    <property type="term" value="P:protein deneddylation"/>
    <property type="evidence" value="ECO:0007669"/>
    <property type="project" value="EnsemblFungi"/>
</dbReference>
<dbReference type="GO" id="GO:0006508">
    <property type="term" value="P:proteolysis"/>
    <property type="evidence" value="ECO:0007669"/>
    <property type="project" value="UniProtKB-KW"/>
</dbReference>
<dbReference type="GO" id="GO:0051726">
    <property type="term" value="P:regulation of cell cycle"/>
    <property type="evidence" value="ECO:0000318"/>
    <property type="project" value="GO_Central"/>
</dbReference>
<dbReference type="CDD" id="cd08069">
    <property type="entry name" value="MPN_RPN11_CSN5"/>
    <property type="match status" value="1"/>
</dbReference>
<dbReference type="FunFam" id="3.40.140.10:FF:000003">
    <property type="entry name" value="COP9 signalosome complex subunit 5"/>
    <property type="match status" value="1"/>
</dbReference>
<dbReference type="Gene3D" id="3.40.140.10">
    <property type="entry name" value="Cytidine Deaminase, domain 2"/>
    <property type="match status" value="1"/>
</dbReference>
<dbReference type="InterPro" id="IPR040961">
    <property type="entry name" value="CSN5_C"/>
</dbReference>
<dbReference type="InterPro" id="IPR000555">
    <property type="entry name" value="JAMM/MPN+_dom"/>
</dbReference>
<dbReference type="InterPro" id="IPR050242">
    <property type="entry name" value="JAMM_MPN+_peptidase_M67A"/>
</dbReference>
<dbReference type="InterPro" id="IPR037518">
    <property type="entry name" value="MPN"/>
</dbReference>
<dbReference type="PANTHER" id="PTHR10410">
    <property type="entry name" value="EUKARYOTIC TRANSLATION INITIATION FACTOR 3 -RELATED"/>
    <property type="match status" value="1"/>
</dbReference>
<dbReference type="Pfam" id="PF18323">
    <property type="entry name" value="CSN5_C"/>
    <property type="match status" value="1"/>
</dbReference>
<dbReference type="Pfam" id="PF01398">
    <property type="entry name" value="JAB"/>
    <property type="match status" value="1"/>
</dbReference>
<dbReference type="SMART" id="SM00232">
    <property type="entry name" value="JAB_MPN"/>
    <property type="match status" value="1"/>
</dbReference>
<dbReference type="SUPFAM" id="SSF102712">
    <property type="entry name" value="JAB1/MPN domain"/>
    <property type="match status" value="1"/>
</dbReference>
<dbReference type="PROSITE" id="PS50249">
    <property type="entry name" value="MPN"/>
    <property type="match status" value="1"/>
</dbReference>